<comment type="function">
    <text evidence="1">Plays a role in cell envelope biogenesis, maintenance of cell envelope integrity and membrane homeostasis.</text>
</comment>
<comment type="subcellular location">
    <subcellularLocation>
        <location evidence="1">Cell inner membrane</location>
        <topology evidence="1">Multi-pass membrane protein</topology>
    </subcellularLocation>
</comment>
<comment type="similarity">
    <text evidence="1">Belongs to the YciB family.</text>
</comment>
<evidence type="ECO:0000255" key="1">
    <source>
        <dbReference type="HAMAP-Rule" id="MF_00189"/>
    </source>
</evidence>
<proteinExistence type="inferred from homology"/>
<protein>
    <recommendedName>
        <fullName evidence="1">Inner membrane-spanning protein YciB</fullName>
    </recommendedName>
</protein>
<keyword id="KW-0997">Cell inner membrane</keyword>
<keyword id="KW-1003">Cell membrane</keyword>
<keyword id="KW-0472">Membrane</keyword>
<keyword id="KW-0812">Transmembrane</keyword>
<keyword id="KW-1133">Transmembrane helix</keyword>
<accession>Q0T5E2</accession>
<gene>
    <name evidence="1" type="primary">yciB</name>
    <name type="ordered locus">SFV_1268</name>
</gene>
<feature type="chain" id="PRO_1000021066" description="Inner membrane-spanning protein YciB">
    <location>
        <begin position="1"/>
        <end position="179"/>
    </location>
</feature>
<feature type="transmembrane region" description="Helical" evidence="1">
    <location>
        <begin position="22"/>
        <end position="42"/>
    </location>
</feature>
<feature type="transmembrane region" description="Helical" evidence="1">
    <location>
        <begin position="50"/>
        <end position="70"/>
    </location>
</feature>
<feature type="transmembrane region" description="Helical" evidence="1">
    <location>
        <begin position="76"/>
        <end position="96"/>
    </location>
</feature>
<feature type="transmembrane region" description="Helical" evidence="1">
    <location>
        <begin position="121"/>
        <end position="141"/>
    </location>
</feature>
<feature type="transmembrane region" description="Helical" evidence="1">
    <location>
        <begin position="149"/>
        <end position="169"/>
    </location>
</feature>
<organism>
    <name type="scientific">Shigella flexneri serotype 5b (strain 8401)</name>
    <dbReference type="NCBI Taxonomy" id="373384"/>
    <lineage>
        <taxon>Bacteria</taxon>
        <taxon>Pseudomonadati</taxon>
        <taxon>Pseudomonadota</taxon>
        <taxon>Gammaproteobacteria</taxon>
        <taxon>Enterobacterales</taxon>
        <taxon>Enterobacteriaceae</taxon>
        <taxon>Shigella</taxon>
    </lineage>
</organism>
<dbReference type="EMBL" id="CP000266">
    <property type="protein sequence ID" value="ABF03473.1"/>
    <property type="molecule type" value="Genomic_DNA"/>
</dbReference>
<dbReference type="RefSeq" id="WP_000808673.1">
    <property type="nucleotide sequence ID" value="NC_008258.1"/>
</dbReference>
<dbReference type="KEGG" id="sfv:SFV_1268"/>
<dbReference type="HOGENOM" id="CLU_089554_2_0_6"/>
<dbReference type="Proteomes" id="UP000000659">
    <property type="component" value="Chromosome"/>
</dbReference>
<dbReference type="GO" id="GO:0005886">
    <property type="term" value="C:plasma membrane"/>
    <property type="evidence" value="ECO:0007669"/>
    <property type="project" value="UniProtKB-SubCell"/>
</dbReference>
<dbReference type="HAMAP" id="MF_00189">
    <property type="entry name" value="YciB"/>
    <property type="match status" value="1"/>
</dbReference>
<dbReference type="InterPro" id="IPR006008">
    <property type="entry name" value="YciB"/>
</dbReference>
<dbReference type="NCBIfam" id="TIGR00997">
    <property type="entry name" value="ispZ"/>
    <property type="match status" value="1"/>
</dbReference>
<dbReference type="NCBIfam" id="NF001324">
    <property type="entry name" value="PRK00259.1-2"/>
    <property type="match status" value="1"/>
</dbReference>
<dbReference type="NCBIfam" id="NF001325">
    <property type="entry name" value="PRK00259.1-3"/>
    <property type="match status" value="1"/>
</dbReference>
<dbReference type="NCBIfam" id="NF001326">
    <property type="entry name" value="PRK00259.1-4"/>
    <property type="match status" value="1"/>
</dbReference>
<dbReference type="PANTHER" id="PTHR36917:SF1">
    <property type="entry name" value="INNER MEMBRANE-SPANNING PROTEIN YCIB"/>
    <property type="match status" value="1"/>
</dbReference>
<dbReference type="PANTHER" id="PTHR36917">
    <property type="entry name" value="INTRACELLULAR SEPTATION PROTEIN A-RELATED"/>
    <property type="match status" value="1"/>
</dbReference>
<dbReference type="Pfam" id="PF04279">
    <property type="entry name" value="IspA"/>
    <property type="match status" value="1"/>
</dbReference>
<sequence>MKQFLDFLPLVVFFAFYKIYDIYAATAALIVATAIVLIYSWVRFRKVEKMALITFVLVVVFGGLTLFFHNDEFIKWKVTVIYALFAGALLVSQWVMKKPLIQRMLSKELTLPQPVWSKLNLAWAVFFILCGLANIYIAFWLPQNIWVNFKVFGLTALTLIFTLLSGIYIYRHMPQEDKS</sequence>
<reference key="1">
    <citation type="journal article" date="2006" name="BMC Genomics">
        <title>Complete genome sequence of Shigella flexneri 5b and comparison with Shigella flexneri 2a.</title>
        <authorList>
            <person name="Nie H."/>
            <person name="Yang F."/>
            <person name="Zhang X."/>
            <person name="Yang J."/>
            <person name="Chen L."/>
            <person name="Wang J."/>
            <person name="Xiong Z."/>
            <person name="Peng J."/>
            <person name="Sun L."/>
            <person name="Dong J."/>
            <person name="Xue Y."/>
            <person name="Xu X."/>
            <person name="Chen S."/>
            <person name="Yao Z."/>
            <person name="Shen Y."/>
            <person name="Jin Q."/>
        </authorList>
    </citation>
    <scope>NUCLEOTIDE SEQUENCE [LARGE SCALE GENOMIC DNA]</scope>
    <source>
        <strain>8401</strain>
    </source>
</reference>
<name>YCIB_SHIF8</name>